<proteinExistence type="inferred from homology"/>
<organism>
    <name type="scientific">Yersinia pseudotuberculosis serotype IB (strain PB1/+)</name>
    <dbReference type="NCBI Taxonomy" id="502801"/>
    <lineage>
        <taxon>Bacteria</taxon>
        <taxon>Pseudomonadati</taxon>
        <taxon>Pseudomonadota</taxon>
        <taxon>Gammaproteobacteria</taxon>
        <taxon>Enterobacterales</taxon>
        <taxon>Yersiniaceae</taxon>
        <taxon>Yersinia</taxon>
    </lineage>
</organism>
<evidence type="ECO:0000255" key="1">
    <source>
        <dbReference type="HAMAP-Rule" id="MF_00300"/>
    </source>
</evidence>
<protein>
    <recommendedName>
        <fullName evidence="1">Chorismate synthase</fullName>
        <shortName evidence="1">CS</shortName>
        <ecNumber evidence="1">4.2.3.5</ecNumber>
    </recommendedName>
    <alternativeName>
        <fullName evidence="1">5-enolpyruvylshikimate-3-phosphate phospholyase</fullName>
    </alternativeName>
</protein>
<feature type="chain" id="PRO_1000115420" description="Chorismate synthase">
    <location>
        <begin position="1"/>
        <end position="361"/>
    </location>
</feature>
<feature type="binding site" evidence="1">
    <location>
        <position position="48"/>
    </location>
    <ligand>
        <name>NADP(+)</name>
        <dbReference type="ChEBI" id="CHEBI:58349"/>
    </ligand>
</feature>
<feature type="binding site" evidence="1">
    <location>
        <position position="54"/>
    </location>
    <ligand>
        <name>NADP(+)</name>
        <dbReference type="ChEBI" id="CHEBI:58349"/>
    </ligand>
</feature>
<feature type="binding site" evidence="1">
    <location>
        <begin position="125"/>
        <end position="127"/>
    </location>
    <ligand>
        <name>FMN</name>
        <dbReference type="ChEBI" id="CHEBI:58210"/>
    </ligand>
</feature>
<feature type="binding site" evidence="1">
    <location>
        <begin position="238"/>
        <end position="239"/>
    </location>
    <ligand>
        <name>FMN</name>
        <dbReference type="ChEBI" id="CHEBI:58210"/>
    </ligand>
</feature>
<feature type="binding site" evidence="1">
    <location>
        <position position="278"/>
    </location>
    <ligand>
        <name>FMN</name>
        <dbReference type="ChEBI" id="CHEBI:58210"/>
    </ligand>
</feature>
<feature type="binding site" evidence="1">
    <location>
        <begin position="293"/>
        <end position="297"/>
    </location>
    <ligand>
        <name>FMN</name>
        <dbReference type="ChEBI" id="CHEBI:58210"/>
    </ligand>
</feature>
<feature type="binding site" evidence="1">
    <location>
        <position position="319"/>
    </location>
    <ligand>
        <name>FMN</name>
        <dbReference type="ChEBI" id="CHEBI:58210"/>
    </ligand>
</feature>
<gene>
    <name evidence="1" type="primary">aroC</name>
    <name type="ordered locus">YPTS_2727</name>
</gene>
<reference key="1">
    <citation type="submission" date="2008-04" db="EMBL/GenBank/DDBJ databases">
        <title>Complete sequence of Yersinia pseudotuberculosis PB1/+.</title>
        <authorList>
            <person name="Copeland A."/>
            <person name="Lucas S."/>
            <person name="Lapidus A."/>
            <person name="Glavina del Rio T."/>
            <person name="Dalin E."/>
            <person name="Tice H."/>
            <person name="Bruce D."/>
            <person name="Goodwin L."/>
            <person name="Pitluck S."/>
            <person name="Munk A.C."/>
            <person name="Brettin T."/>
            <person name="Detter J.C."/>
            <person name="Han C."/>
            <person name="Tapia R."/>
            <person name="Schmutz J."/>
            <person name="Larimer F."/>
            <person name="Land M."/>
            <person name="Hauser L."/>
            <person name="Challacombe J.F."/>
            <person name="Green L."/>
            <person name="Lindler L.E."/>
            <person name="Nikolich M.P."/>
            <person name="Richardson P."/>
        </authorList>
    </citation>
    <scope>NUCLEOTIDE SEQUENCE [LARGE SCALE GENOMIC DNA]</scope>
    <source>
        <strain>PB1/+</strain>
    </source>
</reference>
<sequence length="361" mass="38964">MAGNSIGQFFRVTTFGESHGIALGCIIDGVPPGIPITEADIQLDLDRRRPGTSRYTTQRRELDQVRILSGVFEGVTTGTSIGLMIENTDQRSQDYSAIKDVFRPGHADYTYEQKYGVRDYRGGGRSSARETAMRVAAGAIAKKYLAQKFGVQVRGYLAQMGDVSCDLLDWDLVEQNPFFCPDASKLEPLDALMRELKKAGDSIGAKITVVAENVPVGLGEPVFDRLDADLAHALMSINAVKGVEIGDGFAVVTKRGSENRDEITPQGFQSNHAGGILGGISSGQPVVAHIALKPTSSIMVPGQTINRQGEAVEIVTRGRHDPCVGIRAVPIAEAMMAIVLMDHLLRQRAQCGDVASDVPRW</sequence>
<keyword id="KW-0028">Amino-acid biosynthesis</keyword>
<keyword id="KW-0057">Aromatic amino acid biosynthesis</keyword>
<keyword id="KW-0274">FAD</keyword>
<keyword id="KW-0285">Flavoprotein</keyword>
<keyword id="KW-0288">FMN</keyword>
<keyword id="KW-0456">Lyase</keyword>
<keyword id="KW-0521">NADP</keyword>
<comment type="function">
    <text evidence="1">Catalyzes the anti-1,4-elimination of the C-3 phosphate and the C-6 proR hydrogen from 5-enolpyruvylshikimate-3-phosphate (EPSP) to yield chorismate, which is the branch point compound that serves as the starting substrate for the three terminal pathways of aromatic amino acid biosynthesis. This reaction introduces a second double bond into the aromatic ring system.</text>
</comment>
<comment type="catalytic activity">
    <reaction evidence="1">
        <text>5-O-(1-carboxyvinyl)-3-phosphoshikimate = chorismate + phosphate</text>
        <dbReference type="Rhea" id="RHEA:21020"/>
        <dbReference type="ChEBI" id="CHEBI:29748"/>
        <dbReference type="ChEBI" id="CHEBI:43474"/>
        <dbReference type="ChEBI" id="CHEBI:57701"/>
        <dbReference type="EC" id="4.2.3.5"/>
    </reaction>
</comment>
<comment type="cofactor">
    <cofactor evidence="1">
        <name>FMNH2</name>
        <dbReference type="ChEBI" id="CHEBI:57618"/>
    </cofactor>
    <text evidence="1">Reduced FMN (FMNH(2)).</text>
</comment>
<comment type="pathway">
    <text evidence="1">Metabolic intermediate biosynthesis; chorismate biosynthesis; chorismate from D-erythrose 4-phosphate and phosphoenolpyruvate: step 7/7.</text>
</comment>
<comment type="subunit">
    <text evidence="1">Homotetramer.</text>
</comment>
<comment type="similarity">
    <text evidence="1">Belongs to the chorismate synthase family.</text>
</comment>
<accession>B2K8I9</accession>
<name>AROC_YERPB</name>
<dbReference type="EC" id="4.2.3.5" evidence="1"/>
<dbReference type="EMBL" id="CP001048">
    <property type="protein sequence ID" value="ACC89687.1"/>
    <property type="molecule type" value="Genomic_DNA"/>
</dbReference>
<dbReference type="RefSeq" id="WP_011192692.1">
    <property type="nucleotide sequence ID" value="NZ_CP009780.1"/>
</dbReference>
<dbReference type="SMR" id="B2K8I9"/>
<dbReference type="KEGG" id="ypb:YPTS_2727"/>
<dbReference type="PATRIC" id="fig|502801.10.peg.2151"/>
<dbReference type="UniPathway" id="UPA00053">
    <property type="reaction ID" value="UER00090"/>
</dbReference>
<dbReference type="GO" id="GO:0005829">
    <property type="term" value="C:cytosol"/>
    <property type="evidence" value="ECO:0007669"/>
    <property type="project" value="TreeGrafter"/>
</dbReference>
<dbReference type="GO" id="GO:0004107">
    <property type="term" value="F:chorismate synthase activity"/>
    <property type="evidence" value="ECO:0007669"/>
    <property type="project" value="UniProtKB-UniRule"/>
</dbReference>
<dbReference type="GO" id="GO:0010181">
    <property type="term" value="F:FMN binding"/>
    <property type="evidence" value="ECO:0007669"/>
    <property type="project" value="TreeGrafter"/>
</dbReference>
<dbReference type="GO" id="GO:0008652">
    <property type="term" value="P:amino acid biosynthetic process"/>
    <property type="evidence" value="ECO:0007669"/>
    <property type="project" value="UniProtKB-KW"/>
</dbReference>
<dbReference type="GO" id="GO:0009073">
    <property type="term" value="P:aromatic amino acid family biosynthetic process"/>
    <property type="evidence" value="ECO:0007669"/>
    <property type="project" value="UniProtKB-KW"/>
</dbReference>
<dbReference type="GO" id="GO:0009423">
    <property type="term" value="P:chorismate biosynthetic process"/>
    <property type="evidence" value="ECO:0007669"/>
    <property type="project" value="UniProtKB-UniRule"/>
</dbReference>
<dbReference type="CDD" id="cd07304">
    <property type="entry name" value="Chorismate_synthase"/>
    <property type="match status" value="1"/>
</dbReference>
<dbReference type="FunFam" id="3.60.150.10:FF:000001">
    <property type="entry name" value="Chorismate synthase"/>
    <property type="match status" value="1"/>
</dbReference>
<dbReference type="Gene3D" id="3.60.150.10">
    <property type="entry name" value="Chorismate synthase AroC"/>
    <property type="match status" value="1"/>
</dbReference>
<dbReference type="HAMAP" id="MF_00300">
    <property type="entry name" value="Chorismate_synth"/>
    <property type="match status" value="1"/>
</dbReference>
<dbReference type="InterPro" id="IPR000453">
    <property type="entry name" value="Chorismate_synth"/>
</dbReference>
<dbReference type="InterPro" id="IPR035904">
    <property type="entry name" value="Chorismate_synth_AroC_sf"/>
</dbReference>
<dbReference type="InterPro" id="IPR020541">
    <property type="entry name" value="Chorismate_synthase_CS"/>
</dbReference>
<dbReference type="NCBIfam" id="TIGR00033">
    <property type="entry name" value="aroC"/>
    <property type="match status" value="1"/>
</dbReference>
<dbReference type="NCBIfam" id="NF003793">
    <property type="entry name" value="PRK05382.1"/>
    <property type="match status" value="1"/>
</dbReference>
<dbReference type="PANTHER" id="PTHR21085">
    <property type="entry name" value="CHORISMATE SYNTHASE"/>
    <property type="match status" value="1"/>
</dbReference>
<dbReference type="PANTHER" id="PTHR21085:SF0">
    <property type="entry name" value="CHORISMATE SYNTHASE"/>
    <property type="match status" value="1"/>
</dbReference>
<dbReference type="Pfam" id="PF01264">
    <property type="entry name" value="Chorismate_synt"/>
    <property type="match status" value="1"/>
</dbReference>
<dbReference type="PIRSF" id="PIRSF001456">
    <property type="entry name" value="Chorismate_synth"/>
    <property type="match status" value="1"/>
</dbReference>
<dbReference type="SUPFAM" id="SSF103263">
    <property type="entry name" value="Chorismate synthase, AroC"/>
    <property type="match status" value="1"/>
</dbReference>
<dbReference type="PROSITE" id="PS00787">
    <property type="entry name" value="CHORISMATE_SYNTHASE_1"/>
    <property type="match status" value="1"/>
</dbReference>
<dbReference type="PROSITE" id="PS00788">
    <property type="entry name" value="CHORISMATE_SYNTHASE_2"/>
    <property type="match status" value="1"/>
</dbReference>
<dbReference type="PROSITE" id="PS00789">
    <property type="entry name" value="CHORISMATE_SYNTHASE_3"/>
    <property type="match status" value="1"/>
</dbReference>